<protein>
    <recommendedName>
        <fullName evidence="1">Holliday junction branch migration complex subunit RuvA</fullName>
    </recommendedName>
</protein>
<organism>
    <name type="scientific">Leuconostoc citreum (strain KM20)</name>
    <dbReference type="NCBI Taxonomy" id="349519"/>
    <lineage>
        <taxon>Bacteria</taxon>
        <taxon>Bacillati</taxon>
        <taxon>Bacillota</taxon>
        <taxon>Bacilli</taxon>
        <taxon>Lactobacillales</taxon>
        <taxon>Lactobacillaceae</taxon>
        <taxon>Leuconostoc</taxon>
    </lineage>
</organism>
<name>RUVA_LEUCK</name>
<comment type="function">
    <text evidence="1">The RuvA-RuvB-RuvC complex processes Holliday junction (HJ) DNA during genetic recombination and DNA repair, while the RuvA-RuvB complex plays an important role in the rescue of blocked DNA replication forks via replication fork reversal (RFR). RuvA specifically binds to HJ cruciform DNA, conferring on it an open structure. The RuvB hexamer acts as an ATP-dependent pump, pulling dsDNA into and through the RuvAB complex. HJ branch migration allows RuvC to scan DNA until it finds its consensus sequence, where it cleaves and resolves the cruciform DNA.</text>
</comment>
<comment type="subunit">
    <text evidence="1">Homotetramer. Forms an RuvA(8)-RuvB(12)-Holliday junction (HJ) complex. HJ DNA is sandwiched between 2 RuvA tetramers; dsDNA enters through RuvA and exits via RuvB. An RuvB hexamer assembles on each DNA strand where it exits the tetramer. Each RuvB hexamer is contacted by two RuvA subunits (via domain III) on 2 adjacent RuvB subunits; this complex drives branch migration. In the full resolvosome a probable DNA-RuvA(4)-RuvB(12)-RuvC(2) complex forms which resolves the HJ.</text>
</comment>
<comment type="subcellular location">
    <subcellularLocation>
        <location evidence="1">Cytoplasm</location>
    </subcellularLocation>
</comment>
<comment type="domain">
    <text evidence="1">Has three domains with a flexible linker between the domains II and III and assumes an 'L' shape. Domain III is highly mobile and contacts RuvB.</text>
</comment>
<comment type="similarity">
    <text evidence="1">Belongs to the RuvA family.</text>
</comment>
<reference key="1">
    <citation type="journal article" date="2008" name="J. Bacteriol.">
        <title>Complete genome sequence of Leuconostoc citreum KM20.</title>
        <authorList>
            <person name="Kim J.F."/>
            <person name="Jeong H."/>
            <person name="Lee J.-S."/>
            <person name="Choi S.-H."/>
            <person name="Ha M."/>
            <person name="Hur C.-G."/>
            <person name="Kim J.-S."/>
            <person name="Lee S."/>
            <person name="Park H.-S."/>
            <person name="Park Y.-H."/>
            <person name="Oh T.K."/>
        </authorList>
    </citation>
    <scope>NUCLEOTIDE SEQUENCE [LARGE SCALE GENOMIC DNA]</scope>
    <source>
        <strain>KM20</strain>
    </source>
</reference>
<dbReference type="EMBL" id="DQ489736">
    <property type="protein sequence ID" value="ACA83053.1"/>
    <property type="molecule type" value="Genomic_DNA"/>
</dbReference>
<dbReference type="RefSeq" id="WP_004904886.1">
    <property type="nucleotide sequence ID" value="NC_010471.1"/>
</dbReference>
<dbReference type="SMR" id="B1MZV1"/>
<dbReference type="STRING" id="349519.LCK_01228"/>
<dbReference type="GeneID" id="61101759"/>
<dbReference type="KEGG" id="lci:LCK_01228"/>
<dbReference type="eggNOG" id="COG0632">
    <property type="taxonomic scope" value="Bacteria"/>
</dbReference>
<dbReference type="HOGENOM" id="CLU_087936_1_0_9"/>
<dbReference type="OrthoDB" id="5293449at2"/>
<dbReference type="Proteomes" id="UP000002166">
    <property type="component" value="Chromosome"/>
</dbReference>
<dbReference type="GO" id="GO:0005737">
    <property type="term" value="C:cytoplasm"/>
    <property type="evidence" value="ECO:0007669"/>
    <property type="project" value="UniProtKB-SubCell"/>
</dbReference>
<dbReference type="GO" id="GO:0009379">
    <property type="term" value="C:Holliday junction helicase complex"/>
    <property type="evidence" value="ECO:0007669"/>
    <property type="project" value="InterPro"/>
</dbReference>
<dbReference type="GO" id="GO:0048476">
    <property type="term" value="C:Holliday junction resolvase complex"/>
    <property type="evidence" value="ECO:0007669"/>
    <property type="project" value="UniProtKB-UniRule"/>
</dbReference>
<dbReference type="GO" id="GO:0005524">
    <property type="term" value="F:ATP binding"/>
    <property type="evidence" value="ECO:0007669"/>
    <property type="project" value="InterPro"/>
</dbReference>
<dbReference type="GO" id="GO:0000400">
    <property type="term" value="F:four-way junction DNA binding"/>
    <property type="evidence" value="ECO:0007669"/>
    <property type="project" value="UniProtKB-UniRule"/>
</dbReference>
<dbReference type="GO" id="GO:0009378">
    <property type="term" value="F:four-way junction helicase activity"/>
    <property type="evidence" value="ECO:0007669"/>
    <property type="project" value="InterPro"/>
</dbReference>
<dbReference type="GO" id="GO:0006310">
    <property type="term" value="P:DNA recombination"/>
    <property type="evidence" value="ECO:0007669"/>
    <property type="project" value="UniProtKB-UniRule"/>
</dbReference>
<dbReference type="GO" id="GO:0006281">
    <property type="term" value="P:DNA repair"/>
    <property type="evidence" value="ECO:0007669"/>
    <property type="project" value="UniProtKB-UniRule"/>
</dbReference>
<dbReference type="Gene3D" id="1.10.150.20">
    <property type="entry name" value="5' to 3' exonuclease, C-terminal subdomain"/>
    <property type="match status" value="1"/>
</dbReference>
<dbReference type="Gene3D" id="1.10.8.10">
    <property type="entry name" value="DNA helicase RuvA subunit, C-terminal domain"/>
    <property type="match status" value="1"/>
</dbReference>
<dbReference type="Gene3D" id="2.40.50.140">
    <property type="entry name" value="Nucleic acid-binding proteins"/>
    <property type="match status" value="1"/>
</dbReference>
<dbReference type="HAMAP" id="MF_00031">
    <property type="entry name" value="DNA_HJ_migration_RuvA"/>
    <property type="match status" value="1"/>
</dbReference>
<dbReference type="InterPro" id="IPR013849">
    <property type="entry name" value="DNA_helicase_Holl-junc_RuvA_I"/>
</dbReference>
<dbReference type="InterPro" id="IPR003583">
    <property type="entry name" value="Hlx-hairpin-Hlx_DNA-bd_motif"/>
</dbReference>
<dbReference type="InterPro" id="IPR012340">
    <property type="entry name" value="NA-bd_OB-fold"/>
</dbReference>
<dbReference type="InterPro" id="IPR000085">
    <property type="entry name" value="RuvA"/>
</dbReference>
<dbReference type="InterPro" id="IPR010994">
    <property type="entry name" value="RuvA_2-like"/>
</dbReference>
<dbReference type="InterPro" id="IPR011114">
    <property type="entry name" value="RuvA_C"/>
</dbReference>
<dbReference type="InterPro" id="IPR036267">
    <property type="entry name" value="RuvA_C_sf"/>
</dbReference>
<dbReference type="NCBIfam" id="TIGR00084">
    <property type="entry name" value="ruvA"/>
    <property type="match status" value="1"/>
</dbReference>
<dbReference type="Pfam" id="PF14520">
    <property type="entry name" value="HHH_5"/>
    <property type="match status" value="1"/>
</dbReference>
<dbReference type="Pfam" id="PF07499">
    <property type="entry name" value="RuvA_C"/>
    <property type="match status" value="1"/>
</dbReference>
<dbReference type="Pfam" id="PF01330">
    <property type="entry name" value="RuvA_N"/>
    <property type="match status" value="1"/>
</dbReference>
<dbReference type="SMART" id="SM00278">
    <property type="entry name" value="HhH1"/>
    <property type="match status" value="2"/>
</dbReference>
<dbReference type="SUPFAM" id="SSF46929">
    <property type="entry name" value="DNA helicase RuvA subunit, C-terminal domain"/>
    <property type="match status" value="1"/>
</dbReference>
<dbReference type="SUPFAM" id="SSF50249">
    <property type="entry name" value="Nucleic acid-binding proteins"/>
    <property type="match status" value="1"/>
</dbReference>
<dbReference type="SUPFAM" id="SSF47781">
    <property type="entry name" value="RuvA domain 2-like"/>
    <property type="match status" value="1"/>
</dbReference>
<sequence length="196" mass="21342">MYEYINGLITNIYPAYLVIADRSGVGYKLFVANPYRFEQNVESHVYVEQIVRENEMTLYGFIDENEKYLFNKLLNVSGIGPKSALAILASDDAAGLVTAVANDDASYLTQFPGVGKKTAQQIVLDLKGKLDDLALSAGMTVETVPTTDNQALADALAALESLGYSAKDVAKLQTVLANQKDTTDGYIRSALKFLVK</sequence>
<proteinExistence type="inferred from homology"/>
<gene>
    <name evidence="1" type="primary">ruvA</name>
    <name type="ordered locus">LCK_01228</name>
</gene>
<feature type="chain" id="PRO_1000090334" description="Holliday junction branch migration complex subunit RuvA">
    <location>
        <begin position="1"/>
        <end position="196"/>
    </location>
</feature>
<feature type="region of interest" description="Domain I" evidence="1">
    <location>
        <begin position="1"/>
        <end position="62"/>
    </location>
</feature>
<feature type="region of interest" description="Domain II" evidence="1">
    <location>
        <begin position="63"/>
        <end position="141"/>
    </location>
</feature>
<feature type="region of interest" description="Flexible linker" evidence="1">
    <location>
        <begin position="142"/>
        <end position="146"/>
    </location>
</feature>
<feature type="region of interest" description="Domain III" evidence="1">
    <location>
        <begin position="147"/>
        <end position="196"/>
    </location>
</feature>
<keyword id="KW-0963">Cytoplasm</keyword>
<keyword id="KW-0227">DNA damage</keyword>
<keyword id="KW-0233">DNA recombination</keyword>
<keyword id="KW-0234">DNA repair</keyword>
<keyword id="KW-0238">DNA-binding</keyword>
<keyword id="KW-1185">Reference proteome</keyword>
<evidence type="ECO:0000255" key="1">
    <source>
        <dbReference type="HAMAP-Rule" id="MF_00031"/>
    </source>
</evidence>
<accession>B1MZV1</accession>